<proteinExistence type="evidence at protein level"/>
<feature type="chain" id="PRO_0000282434" description="Lysosomal amino acid transporter 1 homolog">
    <location>
        <begin position="1"/>
        <end position="291"/>
    </location>
</feature>
<feature type="topological domain" description="Lumenal" evidence="1">
    <location>
        <begin position="1"/>
        <end position="37"/>
    </location>
</feature>
<feature type="transmembrane region" description="Helical" evidence="1">
    <location>
        <begin position="38"/>
        <end position="58"/>
    </location>
</feature>
<feature type="topological domain" description="Cytoplasmic" evidence="1">
    <location>
        <begin position="59"/>
        <end position="71"/>
    </location>
</feature>
<feature type="transmembrane region" description="Helical" evidence="1">
    <location>
        <begin position="72"/>
        <end position="92"/>
    </location>
</feature>
<feature type="topological domain" description="Lumenal" evidence="1">
    <location>
        <begin position="93"/>
        <end position="98"/>
    </location>
</feature>
<feature type="transmembrane region" description="Helical" evidence="1">
    <location>
        <begin position="99"/>
        <end position="119"/>
    </location>
</feature>
<feature type="topological domain" description="Cytoplasmic" evidence="1">
    <location>
        <begin position="120"/>
        <end position="134"/>
    </location>
</feature>
<feature type="transmembrane region" description="Helical" evidence="1">
    <location>
        <begin position="135"/>
        <end position="155"/>
    </location>
</feature>
<feature type="topological domain" description="Lumenal" evidence="1">
    <location>
        <begin position="156"/>
        <end position="182"/>
    </location>
</feature>
<feature type="transmembrane region" description="Helical" evidence="1">
    <location>
        <begin position="183"/>
        <end position="203"/>
    </location>
</feature>
<feature type="topological domain" description="Cytoplasmic" evidence="1">
    <location>
        <begin position="204"/>
        <end position="214"/>
    </location>
</feature>
<feature type="transmembrane region" description="Helical" evidence="1">
    <location>
        <begin position="215"/>
        <end position="235"/>
    </location>
</feature>
<feature type="topological domain" description="Lumenal" evidence="1">
    <location>
        <begin position="236"/>
        <end position="254"/>
    </location>
</feature>
<feature type="transmembrane region" description="Helical" evidence="1">
    <location>
        <begin position="255"/>
        <end position="275"/>
    </location>
</feature>
<feature type="topological domain" description="Cytoplasmic" evidence="1">
    <location>
        <begin position="276"/>
        <end position="291"/>
    </location>
</feature>
<feature type="domain" description="PQ-loop 1">
    <location>
        <begin position="34"/>
        <end position="100"/>
    </location>
</feature>
<feature type="domain" description="PQ-loop 2">
    <location>
        <begin position="184"/>
        <end position="243"/>
    </location>
</feature>
<feature type="short sequence motif" description="Di-leucine motif">
    <location>
        <begin position="288"/>
        <end position="289"/>
    </location>
</feature>
<feature type="glycosylation site" description="N-linked (GlcNAc...) asparagine" evidence="1">
    <location>
        <position position="10"/>
    </location>
</feature>
<feature type="splice variant" id="VSP_024151" description="In isoform 2." evidence="4">
    <location>
        <begin position="1"/>
        <end position="111"/>
    </location>
</feature>
<feature type="splice variant" id="VSP_024152" description="In isoform 3." evidence="5">
    <location>
        <begin position="1"/>
        <end position="65"/>
    </location>
</feature>
<feature type="sequence variant" id="VAR_031409" description="In dbSNP:rs12140547.">
    <original>S</original>
    <variation>N</variation>
    <location>
        <position position="16"/>
    </location>
</feature>
<feature type="mutagenesis site" description="Abolishes uptake of arginine and lysine." evidence="2">
    <original>P</original>
    <variation>L</variation>
    <location>
        <position position="55"/>
    </location>
</feature>
<feature type="mutagenesis site" description="Abolishes lysosomal localization." evidence="2">
    <location>
        <begin position="288"/>
        <end position="289"/>
    </location>
</feature>
<feature type="sequence conflict" description="In Ref. 1; BAC85298." evidence="6" ref="1">
    <original>C</original>
    <variation>R</variation>
    <location>
        <position position="29"/>
    </location>
</feature>
<feature type="sequence conflict" description="In Ref. 1; BAG54217." evidence="6" ref="1">
    <original>G</original>
    <variation>D</variation>
    <location>
        <position position="173"/>
    </location>
</feature>
<feature type="sequence conflict" description="In Ref. 1; BAD18732." evidence="6" ref="1">
    <original>S</original>
    <variation>F</variation>
    <location>
        <position position="191"/>
    </location>
</feature>
<feature type="sequence conflict" description="In Ref. 1; BAG54217." evidence="6" ref="1">
    <original>E</original>
    <variation>K</variation>
    <location>
        <position position="286"/>
    </location>
</feature>
<sequence length="291" mass="31947">MVWKKLGSRNFSSCPSGSIQWIWDVLGECAQDGWDEASVGLGLISILCFAASTFPQFIKAYKTGNMDQALSLWFLLGWIGGDSCNLIGSFLADQLPLQTYTAVYYVLADLVMLTLYFYYKFRTRPSLLSAPINSVLLFLMGMACATPLLSAAGPVAAPREAFRGRALLSVESGSKPFTRQEVIGFVIGSISSVLYLLSRLPQIRTNFLRKSTQGISYSLFALVMLGNTLYGLSVLLKNPEEGQSEGSYLLHHLPWLVGSLGVLLLDTIISIQFLVYRRSTAASELEPLLPS</sequence>
<gene>
    <name evidence="8" type="primary">SLC66A1</name>
    <name evidence="8" type="synonym">PQLC2</name>
</gene>
<reference key="1">
    <citation type="journal article" date="2004" name="Nat. Genet.">
        <title>Complete sequencing and characterization of 21,243 full-length human cDNAs.</title>
        <authorList>
            <person name="Ota T."/>
            <person name="Suzuki Y."/>
            <person name="Nishikawa T."/>
            <person name="Otsuki T."/>
            <person name="Sugiyama T."/>
            <person name="Irie R."/>
            <person name="Wakamatsu A."/>
            <person name="Hayashi K."/>
            <person name="Sato H."/>
            <person name="Nagai K."/>
            <person name="Kimura K."/>
            <person name="Makita H."/>
            <person name="Sekine M."/>
            <person name="Obayashi M."/>
            <person name="Nishi T."/>
            <person name="Shibahara T."/>
            <person name="Tanaka T."/>
            <person name="Ishii S."/>
            <person name="Yamamoto J."/>
            <person name="Saito K."/>
            <person name="Kawai Y."/>
            <person name="Isono Y."/>
            <person name="Nakamura Y."/>
            <person name="Nagahari K."/>
            <person name="Murakami K."/>
            <person name="Yasuda T."/>
            <person name="Iwayanagi T."/>
            <person name="Wagatsuma M."/>
            <person name="Shiratori A."/>
            <person name="Sudo H."/>
            <person name="Hosoiri T."/>
            <person name="Kaku Y."/>
            <person name="Kodaira H."/>
            <person name="Kondo H."/>
            <person name="Sugawara M."/>
            <person name="Takahashi M."/>
            <person name="Kanda K."/>
            <person name="Yokoi T."/>
            <person name="Furuya T."/>
            <person name="Kikkawa E."/>
            <person name="Omura Y."/>
            <person name="Abe K."/>
            <person name="Kamihara K."/>
            <person name="Katsuta N."/>
            <person name="Sato K."/>
            <person name="Tanikawa M."/>
            <person name="Yamazaki M."/>
            <person name="Ninomiya K."/>
            <person name="Ishibashi T."/>
            <person name="Yamashita H."/>
            <person name="Murakawa K."/>
            <person name="Fujimori K."/>
            <person name="Tanai H."/>
            <person name="Kimata M."/>
            <person name="Watanabe M."/>
            <person name="Hiraoka S."/>
            <person name="Chiba Y."/>
            <person name="Ishida S."/>
            <person name="Ono Y."/>
            <person name="Takiguchi S."/>
            <person name="Watanabe S."/>
            <person name="Yosida M."/>
            <person name="Hotuta T."/>
            <person name="Kusano J."/>
            <person name="Kanehori K."/>
            <person name="Takahashi-Fujii A."/>
            <person name="Hara H."/>
            <person name="Tanase T.-O."/>
            <person name="Nomura Y."/>
            <person name="Togiya S."/>
            <person name="Komai F."/>
            <person name="Hara R."/>
            <person name="Takeuchi K."/>
            <person name="Arita M."/>
            <person name="Imose N."/>
            <person name="Musashino K."/>
            <person name="Yuuki H."/>
            <person name="Oshima A."/>
            <person name="Sasaki N."/>
            <person name="Aotsuka S."/>
            <person name="Yoshikawa Y."/>
            <person name="Matsunawa H."/>
            <person name="Ichihara T."/>
            <person name="Shiohata N."/>
            <person name="Sano S."/>
            <person name="Moriya S."/>
            <person name="Momiyama H."/>
            <person name="Satoh N."/>
            <person name="Takami S."/>
            <person name="Terashima Y."/>
            <person name="Suzuki O."/>
            <person name="Nakagawa S."/>
            <person name="Senoh A."/>
            <person name="Mizoguchi H."/>
            <person name="Goto Y."/>
            <person name="Shimizu F."/>
            <person name="Wakebe H."/>
            <person name="Hishigaki H."/>
            <person name="Watanabe T."/>
            <person name="Sugiyama A."/>
            <person name="Takemoto M."/>
            <person name="Kawakami B."/>
            <person name="Yamazaki M."/>
            <person name="Watanabe K."/>
            <person name="Kumagai A."/>
            <person name="Itakura S."/>
            <person name="Fukuzumi Y."/>
            <person name="Fujimori Y."/>
            <person name="Komiyama M."/>
            <person name="Tashiro H."/>
            <person name="Tanigami A."/>
            <person name="Fujiwara T."/>
            <person name="Ono T."/>
            <person name="Yamada K."/>
            <person name="Fujii Y."/>
            <person name="Ozaki K."/>
            <person name="Hirao M."/>
            <person name="Ohmori Y."/>
            <person name="Kawabata A."/>
            <person name="Hikiji T."/>
            <person name="Kobatake N."/>
            <person name="Inagaki H."/>
            <person name="Ikema Y."/>
            <person name="Okamoto S."/>
            <person name="Okitani R."/>
            <person name="Kawakami T."/>
            <person name="Noguchi S."/>
            <person name="Itoh T."/>
            <person name="Shigeta K."/>
            <person name="Senba T."/>
            <person name="Matsumura K."/>
            <person name="Nakajima Y."/>
            <person name="Mizuno T."/>
            <person name="Morinaga M."/>
            <person name="Sasaki M."/>
            <person name="Togashi T."/>
            <person name="Oyama M."/>
            <person name="Hata H."/>
            <person name="Watanabe M."/>
            <person name="Komatsu T."/>
            <person name="Mizushima-Sugano J."/>
            <person name="Satoh T."/>
            <person name="Shirai Y."/>
            <person name="Takahashi Y."/>
            <person name="Nakagawa K."/>
            <person name="Okumura K."/>
            <person name="Nagase T."/>
            <person name="Nomura N."/>
            <person name="Kikuchi H."/>
            <person name="Masuho Y."/>
            <person name="Yamashita R."/>
            <person name="Nakai K."/>
            <person name="Yada T."/>
            <person name="Nakamura Y."/>
            <person name="Ohara O."/>
            <person name="Isogai T."/>
            <person name="Sugano S."/>
        </authorList>
    </citation>
    <scope>NUCLEOTIDE SEQUENCE [LARGE SCALE MRNA] (ISOFORMS 1 AND 2)</scope>
    <source>
        <tissue>Adipose tissue</tissue>
        <tissue>Hepatoma</tissue>
        <tissue>Macrophage</tissue>
        <tissue>Small intestine</tissue>
    </source>
</reference>
<reference key="2">
    <citation type="journal article" date="2006" name="Nature">
        <title>The DNA sequence and biological annotation of human chromosome 1.</title>
        <authorList>
            <person name="Gregory S.G."/>
            <person name="Barlow K.F."/>
            <person name="McLay K.E."/>
            <person name="Kaul R."/>
            <person name="Swarbreck D."/>
            <person name="Dunham A."/>
            <person name="Scott C.E."/>
            <person name="Howe K.L."/>
            <person name="Woodfine K."/>
            <person name="Spencer C.C.A."/>
            <person name="Jones M.C."/>
            <person name="Gillson C."/>
            <person name="Searle S."/>
            <person name="Zhou Y."/>
            <person name="Kokocinski F."/>
            <person name="McDonald L."/>
            <person name="Evans R."/>
            <person name="Phillips K."/>
            <person name="Atkinson A."/>
            <person name="Cooper R."/>
            <person name="Jones C."/>
            <person name="Hall R.E."/>
            <person name="Andrews T.D."/>
            <person name="Lloyd C."/>
            <person name="Ainscough R."/>
            <person name="Almeida J.P."/>
            <person name="Ambrose K.D."/>
            <person name="Anderson F."/>
            <person name="Andrew R.W."/>
            <person name="Ashwell R.I.S."/>
            <person name="Aubin K."/>
            <person name="Babbage A.K."/>
            <person name="Bagguley C.L."/>
            <person name="Bailey J."/>
            <person name="Beasley H."/>
            <person name="Bethel G."/>
            <person name="Bird C.P."/>
            <person name="Bray-Allen S."/>
            <person name="Brown J.Y."/>
            <person name="Brown A.J."/>
            <person name="Buckley D."/>
            <person name="Burton J."/>
            <person name="Bye J."/>
            <person name="Carder C."/>
            <person name="Chapman J.C."/>
            <person name="Clark S.Y."/>
            <person name="Clarke G."/>
            <person name="Clee C."/>
            <person name="Cobley V."/>
            <person name="Collier R.E."/>
            <person name="Corby N."/>
            <person name="Coville G.J."/>
            <person name="Davies J."/>
            <person name="Deadman R."/>
            <person name="Dunn M."/>
            <person name="Earthrowl M."/>
            <person name="Ellington A.G."/>
            <person name="Errington H."/>
            <person name="Frankish A."/>
            <person name="Frankland J."/>
            <person name="French L."/>
            <person name="Garner P."/>
            <person name="Garnett J."/>
            <person name="Gay L."/>
            <person name="Ghori M.R.J."/>
            <person name="Gibson R."/>
            <person name="Gilby L.M."/>
            <person name="Gillett W."/>
            <person name="Glithero R.J."/>
            <person name="Grafham D.V."/>
            <person name="Griffiths C."/>
            <person name="Griffiths-Jones S."/>
            <person name="Grocock R."/>
            <person name="Hammond S."/>
            <person name="Harrison E.S.I."/>
            <person name="Hart E."/>
            <person name="Haugen E."/>
            <person name="Heath P.D."/>
            <person name="Holmes S."/>
            <person name="Holt K."/>
            <person name="Howden P.J."/>
            <person name="Hunt A.R."/>
            <person name="Hunt S.E."/>
            <person name="Hunter G."/>
            <person name="Isherwood J."/>
            <person name="James R."/>
            <person name="Johnson C."/>
            <person name="Johnson D."/>
            <person name="Joy A."/>
            <person name="Kay M."/>
            <person name="Kershaw J.K."/>
            <person name="Kibukawa M."/>
            <person name="Kimberley A.M."/>
            <person name="King A."/>
            <person name="Knights A.J."/>
            <person name="Lad H."/>
            <person name="Laird G."/>
            <person name="Lawlor S."/>
            <person name="Leongamornlert D.A."/>
            <person name="Lloyd D.M."/>
            <person name="Loveland J."/>
            <person name="Lovell J."/>
            <person name="Lush M.J."/>
            <person name="Lyne R."/>
            <person name="Martin S."/>
            <person name="Mashreghi-Mohammadi M."/>
            <person name="Matthews L."/>
            <person name="Matthews N.S.W."/>
            <person name="McLaren S."/>
            <person name="Milne S."/>
            <person name="Mistry S."/>
            <person name="Moore M.J.F."/>
            <person name="Nickerson T."/>
            <person name="O'Dell C.N."/>
            <person name="Oliver K."/>
            <person name="Palmeiri A."/>
            <person name="Palmer S.A."/>
            <person name="Parker A."/>
            <person name="Patel D."/>
            <person name="Pearce A.V."/>
            <person name="Peck A.I."/>
            <person name="Pelan S."/>
            <person name="Phelps K."/>
            <person name="Phillimore B.J."/>
            <person name="Plumb R."/>
            <person name="Rajan J."/>
            <person name="Raymond C."/>
            <person name="Rouse G."/>
            <person name="Saenphimmachak C."/>
            <person name="Sehra H.K."/>
            <person name="Sheridan E."/>
            <person name="Shownkeen R."/>
            <person name="Sims S."/>
            <person name="Skuce C.D."/>
            <person name="Smith M."/>
            <person name="Steward C."/>
            <person name="Subramanian S."/>
            <person name="Sycamore N."/>
            <person name="Tracey A."/>
            <person name="Tromans A."/>
            <person name="Van Helmond Z."/>
            <person name="Wall M."/>
            <person name="Wallis J.M."/>
            <person name="White S."/>
            <person name="Whitehead S.L."/>
            <person name="Wilkinson J.E."/>
            <person name="Willey D.L."/>
            <person name="Williams H."/>
            <person name="Wilming L."/>
            <person name="Wray P.W."/>
            <person name="Wu Z."/>
            <person name="Coulson A."/>
            <person name="Vaudin M."/>
            <person name="Sulston J.E."/>
            <person name="Durbin R.M."/>
            <person name="Hubbard T."/>
            <person name="Wooster R."/>
            <person name="Dunham I."/>
            <person name="Carter N.P."/>
            <person name="McVean G."/>
            <person name="Ross M.T."/>
            <person name="Harrow J."/>
            <person name="Olson M.V."/>
            <person name="Beck S."/>
            <person name="Rogers J."/>
            <person name="Bentley D.R."/>
        </authorList>
    </citation>
    <scope>NUCLEOTIDE SEQUENCE [LARGE SCALE GENOMIC DNA]</scope>
</reference>
<reference key="3">
    <citation type="journal article" date="2004" name="Genome Res.">
        <title>The status, quality, and expansion of the NIH full-length cDNA project: the Mammalian Gene Collection (MGC).</title>
        <authorList>
            <consortium name="The MGC Project Team"/>
        </authorList>
    </citation>
    <scope>NUCLEOTIDE SEQUENCE [LARGE SCALE MRNA] (ISOFORM 3)</scope>
    <source>
        <tissue>Kidney</tissue>
    </source>
</reference>
<reference key="4">
    <citation type="journal article" date="2012" name="Proc. Natl. Acad. Sci. U.S.A.">
        <title>Heptahelical protein PQLC2 is a lysosomal cationic amino acid exporter underlying the action of cysteamine in cystinosis therapy.</title>
        <authorList>
            <person name="Jezegou A."/>
            <person name="Llinares E."/>
            <person name="Anne C."/>
            <person name="Kieffer-Jaquinod S."/>
            <person name="O'Regan S."/>
            <person name="Aupetit J."/>
            <person name="Chabli A."/>
            <person name="Sagne C."/>
            <person name="Debacker C."/>
            <person name="Chadefaux-Vekemans B."/>
            <person name="Journet A."/>
            <person name="Andre B."/>
            <person name="Gasnier B."/>
        </authorList>
    </citation>
    <scope>FUNCTION</scope>
</reference>
<reference key="5">
    <citation type="journal article" date="2012" name="Science">
        <title>LAAT-1 is the lysosomal lysine/arginine transporter that maintains amino acid homeostasis.</title>
        <authorList>
            <person name="Liu B."/>
            <person name="Du H."/>
            <person name="Rutkowski R."/>
            <person name="Gartner A."/>
            <person name="Wang X."/>
        </authorList>
    </citation>
    <scope>FUNCTION</scope>
    <scope>SUBCELLULAR LOCATION</scope>
    <scope>MUTAGENESIS OF PRO-55 AND 288-LEU-LEU-289</scope>
</reference>
<comment type="function">
    <text evidence="2 3">Amino acid transporter that specifically mediates the pH-dependent export of the cationic amino acids arginine, histidine and lysine from lysosomes.</text>
</comment>
<comment type="interaction">
    <interactant intactId="EBI-12889586">
        <id>Q6ZP29-3</id>
    </interactant>
    <interactant intactId="EBI-13059134">
        <id>Q13520</id>
        <label>AQP6</label>
    </interactant>
    <organismsDiffer>false</organismsDiffer>
    <experiments>3</experiments>
</comment>
<comment type="interaction">
    <interactant intactId="EBI-12889586">
        <id>Q6ZP29-3</id>
    </interactant>
    <interactant intactId="EBI-750433">
        <id>P36382</id>
        <label>GJA5</label>
    </interactant>
    <organismsDiffer>false</organismsDiffer>
    <experiments>3</experiments>
</comment>
<comment type="interaction">
    <interactant intactId="EBI-12889586">
        <id>Q6ZP29-3</id>
    </interactant>
    <interactant intactId="EBI-17458373">
        <id>P48165</id>
        <label>GJA8</label>
    </interactant>
    <organismsDiffer>false</organismsDiffer>
    <experiments>3</experiments>
</comment>
<comment type="interaction">
    <interactant intactId="EBI-12889586">
        <id>Q6ZP29-3</id>
    </interactant>
    <interactant intactId="EBI-11979659">
        <id>P36383</id>
        <label>GJC1</label>
    </interactant>
    <organismsDiffer>false</organismsDiffer>
    <experiments>3</experiments>
</comment>
<comment type="interaction">
    <interactant intactId="EBI-12889586">
        <id>Q6ZP29-3</id>
    </interactant>
    <interactant intactId="EBI-13345167">
        <id>Q8TDT2</id>
        <label>GPR152</label>
    </interactant>
    <organismsDiffer>false</organismsDiffer>
    <experiments>3</experiments>
</comment>
<comment type="interaction">
    <interactant intactId="EBI-12889586">
        <id>Q6ZP29-3</id>
    </interactant>
    <interactant intactId="EBI-13067820">
        <id>Q9NZD1</id>
        <label>GPRC5D</label>
    </interactant>
    <organismsDiffer>false</organismsDiffer>
    <experiments>3</experiments>
</comment>
<comment type="interaction">
    <interactant intactId="EBI-12889586">
        <id>Q6ZP29-3</id>
    </interactant>
    <interactant intactId="EBI-10317425">
        <id>Q9NZG7</id>
        <label>NINJ2</label>
    </interactant>
    <organismsDiffer>false</organismsDiffer>
    <experiments>3</experiments>
</comment>
<comment type="interaction">
    <interactant intactId="EBI-12889586">
        <id>Q6ZP29-3</id>
    </interactant>
    <interactant intactId="EBI-17295964">
        <id>Q9NQQ7-3</id>
        <label>SLC35C2</label>
    </interactant>
    <organismsDiffer>false</organismsDiffer>
    <experiments>3</experiments>
</comment>
<comment type="interaction">
    <interactant intactId="EBI-12889586">
        <id>Q6ZP29-3</id>
    </interactant>
    <interactant intactId="EBI-12898013">
        <id>Q9NP94</id>
        <label>SLC39A2</label>
    </interactant>
    <organismsDiffer>false</organismsDiffer>
    <experiments>3</experiments>
</comment>
<comment type="interaction">
    <interactant intactId="EBI-12889586">
        <id>Q6ZP29-3</id>
    </interactant>
    <interactant intactId="EBI-2823239">
        <id>Q9NUM3</id>
        <label>SLC39A9</label>
    </interactant>
    <organismsDiffer>false</organismsDiffer>
    <experiments>3</experiments>
</comment>
<comment type="subcellular location">
    <subcellularLocation>
        <location evidence="2">Lysosome membrane</location>
        <topology evidence="2">Multi-pass membrane protein</topology>
    </subcellularLocation>
</comment>
<comment type="alternative products">
    <event type="alternative splicing"/>
    <isoform>
        <id>Q6ZP29-1</id>
        <name>1</name>
        <sequence type="displayed"/>
    </isoform>
    <isoform>
        <id>Q6ZP29-2</id>
        <name>2</name>
        <sequence type="described" ref="VSP_024151"/>
    </isoform>
    <isoform>
        <id>Q6ZP29-3</id>
        <name>3</name>
        <sequence type="described" ref="VSP_024152"/>
    </isoform>
</comment>
<comment type="domain">
    <text evidence="2">The di-leucine motif mediates lysosomal localization.</text>
</comment>
<comment type="miscellaneous">
    <text evidence="7">May play a role in the export from lysosomes of cysteamine-cysteine mixed disulfide (MxD), the product formed upon treatment by cysteamine of patients with cystinosis, a disease characterized by the accumulation of cystine in the lysosomes.</text>
</comment>
<comment type="similarity">
    <text evidence="6">Belongs to the laat-1 family.</text>
</comment>
<comment type="sequence caution" evidence="6">
    <conflict type="frameshift">
        <sequence resource="EMBL-CDS" id="BAA91088"/>
    </conflict>
</comment>
<name>LAAT1_HUMAN</name>
<dbReference type="EMBL" id="AK000327">
    <property type="protein sequence ID" value="BAA91088.1"/>
    <property type="status" value="ALT_FRAME"/>
    <property type="molecule type" value="mRNA"/>
</dbReference>
<dbReference type="EMBL" id="AK125580">
    <property type="protein sequence ID" value="BAG54217.1"/>
    <property type="molecule type" value="mRNA"/>
</dbReference>
<dbReference type="EMBL" id="AK130171">
    <property type="protein sequence ID" value="BAC85296.1"/>
    <property type="molecule type" value="mRNA"/>
</dbReference>
<dbReference type="EMBL" id="AK130175">
    <property type="protein sequence ID" value="BAC85298.1"/>
    <property type="molecule type" value="mRNA"/>
</dbReference>
<dbReference type="EMBL" id="AK172745">
    <property type="protein sequence ID" value="BAD18732.1"/>
    <property type="molecule type" value="mRNA"/>
</dbReference>
<dbReference type="EMBL" id="AL035413">
    <property type="status" value="NOT_ANNOTATED_CDS"/>
    <property type="molecule type" value="Genomic_DNA"/>
</dbReference>
<dbReference type="EMBL" id="BC015324">
    <property type="protein sequence ID" value="AAH15324.1"/>
    <property type="molecule type" value="mRNA"/>
</dbReference>
<dbReference type="CCDS" id="CCDS195.2">
    <molecule id="Q6ZP29-1"/>
</dbReference>
<dbReference type="CCDS" id="CCDS30618.1">
    <molecule id="Q6ZP29-3"/>
</dbReference>
<dbReference type="RefSeq" id="NP_001035214.1">
    <molecule id="Q6ZP29-1"/>
    <property type="nucleotide sequence ID" value="NM_001040125.2"/>
</dbReference>
<dbReference type="RefSeq" id="NP_001035215.1">
    <molecule id="Q6ZP29-3"/>
    <property type="nucleotide sequence ID" value="NM_001040126.2"/>
</dbReference>
<dbReference type="RefSeq" id="NP_001274460.1">
    <molecule id="Q6ZP29-2"/>
    <property type="nucleotide sequence ID" value="NM_001287531.2"/>
</dbReference>
<dbReference type="RefSeq" id="NP_060235.2">
    <molecule id="Q6ZP29-1"/>
    <property type="nucleotide sequence ID" value="NM_017765.3"/>
</dbReference>
<dbReference type="RefSeq" id="XP_005245973.1">
    <molecule id="Q6ZP29-1"/>
    <property type="nucleotide sequence ID" value="XM_005245916.3"/>
</dbReference>
<dbReference type="RefSeq" id="XP_006710773.1">
    <property type="nucleotide sequence ID" value="XM_006710710.2"/>
</dbReference>
<dbReference type="RefSeq" id="XP_006710774.1">
    <property type="nucleotide sequence ID" value="XM_006710711.2"/>
</dbReference>
<dbReference type="RefSeq" id="XP_054193223.1">
    <molecule id="Q6ZP29-1"/>
    <property type="nucleotide sequence ID" value="XM_054337248.1"/>
</dbReference>
<dbReference type="SMR" id="Q6ZP29"/>
<dbReference type="BioGRID" id="120242">
    <property type="interactions" value="13"/>
</dbReference>
<dbReference type="FunCoup" id="Q6ZP29">
    <property type="interactions" value="366"/>
</dbReference>
<dbReference type="IntAct" id="Q6ZP29">
    <property type="interactions" value="10"/>
</dbReference>
<dbReference type="STRING" id="9606.ENSP00000364295"/>
<dbReference type="TCDB" id="2.A.43.2.1">
    <property type="family name" value="the lysosomal cystine transporter (lct) family"/>
</dbReference>
<dbReference type="GlyCosmos" id="Q6ZP29">
    <property type="glycosylation" value="1 site, No reported glycans"/>
</dbReference>
<dbReference type="GlyGen" id="Q6ZP29">
    <property type="glycosylation" value="1 site"/>
</dbReference>
<dbReference type="iPTMnet" id="Q6ZP29"/>
<dbReference type="PhosphoSitePlus" id="Q6ZP29"/>
<dbReference type="BioMuta" id="PQLC2"/>
<dbReference type="DMDM" id="74749590"/>
<dbReference type="PaxDb" id="9606-ENSP00000364295"/>
<dbReference type="PeptideAtlas" id="Q6ZP29"/>
<dbReference type="Pumba" id="Q6ZP29"/>
<dbReference type="Antibodypedia" id="46685">
    <property type="antibodies" value="87 antibodies from 16 providers"/>
</dbReference>
<dbReference type="DNASU" id="54896"/>
<dbReference type="Ensembl" id="ENST00000375153.8">
    <molecule id="Q6ZP29-1"/>
    <property type="protein sequence ID" value="ENSP00000364295.3"/>
    <property type="gene ID" value="ENSG00000040487.13"/>
</dbReference>
<dbReference type="Ensembl" id="ENST00000375155.7">
    <molecule id="Q6ZP29-1"/>
    <property type="protein sequence ID" value="ENSP00000364297.3"/>
    <property type="gene ID" value="ENSG00000040487.13"/>
</dbReference>
<dbReference type="Ensembl" id="ENST00000400548.6">
    <molecule id="Q6ZP29-3"/>
    <property type="protein sequence ID" value="ENSP00000383395.2"/>
    <property type="gene ID" value="ENSG00000040487.13"/>
</dbReference>
<dbReference type="GeneID" id="54896"/>
<dbReference type="KEGG" id="hsa:54896"/>
<dbReference type="MANE-Select" id="ENST00000375153.8">
    <property type="protein sequence ID" value="ENSP00000364295.3"/>
    <property type="RefSeq nucleotide sequence ID" value="NM_001040125.2"/>
    <property type="RefSeq protein sequence ID" value="NP_001035214.1"/>
</dbReference>
<dbReference type="UCSC" id="uc001bby.4">
    <molecule id="Q6ZP29-1"/>
    <property type="organism name" value="human"/>
</dbReference>
<dbReference type="AGR" id="HGNC:26001"/>
<dbReference type="CTD" id="54896"/>
<dbReference type="DisGeNET" id="54896"/>
<dbReference type="GeneCards" id="SLC66A1"/>
<dbReference type="HGNC" id="HGNC:26001">
    <property type="gene designation" value="SLC66A1"/>
</dbReference>
<dbReference type="HPA" id="ENSG00000040487">
    <property type="expression patterns" value="Low tissue specificity"/>
</dbReference>
<dbReference type="MalaCards" id="SLC66A1"/>
<dbReference type="MIM" id="614760">
    <property type="type" value="gene"/>
</dbReference>
<dbReference type="neXtProt" id="NX_Q6ZP29"/>
<dbReference type="OpenTargets" id="ENSG00000040487"/>
<dbReference type="VEuPathDB" id="HostDB:ENSG00000040487"/>
<dbReference type="eggNOG" id="KOG2913">
    <property type="taxonomic scope" value="Eukaryota"/>
</dbReference>
<dbReference type="GeneTree" id="ENSGT00390000003344"/>
<dbReference type="HOGENOM" id="CLU_019699_3_0_1"/>
<dbReference type="InParanoid" id="Q6ZP29"/>
<dbReference type="OMA" id="DMCIFIQ"/>
<dbReference type="OrthoDB" id="8048523at2759"/>
<dbReference type="PAN-GO" id="Q6ZP29">
    <property type="GO annotations" value="3 GO annotations based on evolutionary models"/>
</dbReference>
<dbReference type="PhylomeDB" id="Q6ZP29"/>
<dbReference type="TreeFam" id="TF313694"/>
<dbReference type="PathwayCommons" id="Q6ZP29"/>
<dbReference type="Reactome" id="R-HSA-5223345">
    <property type="pathway name" value="Miscellaneous transport and binding events"/>
</dbReference>
<dbReference type="SignaLink" id="Q6ZP29"/>
<dbReference type="BioGRID-ORCS" id="54896">
    <property type="hits" value="14 hits in 1152 CRISPR screens"/>
</dbReference>
<dbReference type="ChiTaRS" id="PQLC2">
    <property type="organism name" value="human"/>
</dbReference>
<dbReference type="GenomeRNAi" id="54896"/>
<dbReference type="Pharos" id="Q6ZP29">
    <property type="development level" value="Tbio"/>
</dbReference>
<dbReference type="PRO" id="PR:Q6ZP29"/>
<dbReference type="Proteomes" id="UP000005640">
    <property type="component" value="Chromosome 1"/>
</dbReference>
<dbReference type="RNAct" id="Q6ZP29">
    <property type="molecule type" value="protein"/>
</dbReference>
<dbReference type="Bgee" id="ENSG00000040487">
    <property type="expression patterns" value="Expressed in right hemisphere of cerebellum and 109 other cell types or tissues"/>
</dbReference>
<dbReference type="ExpressionAtlas" id="Q6ZP29">
    <property type="expression patterns" value="baseline and differential"/>
</dbReference>
<dbReference type="GO" id="GO:0043231">
    <property type="term" value="C:intracellular membrane-bounded organelle"/>
    <property type="evidence" value="ECO:0000314"/>
    <property type="project" value="HPA"/>
</dbReference>
<dbReference type="GO" id="GO:0005765">
    <property type="term" value="C:lysosomal membrane"/>
    <property type="evidence" value="ECO:0000314"/>
    <property type="project" value="UniProtKB"/>
</dbReference>
<dbReference type="GO" id="GO:0031090">
    <property type="term" value="C:organelle membrane"/>
    <property type="evidence" value="ECO:0000314"/>
    <property type="project" value="UniProtKB"/>
</dbReference>
<dbReference type="GO" id="GO:0015174">
    <property type="term" value="F:basic amino acid transmembrane transporter activity"/>
    <property type="evidence" value="ECO:0000250"/>
    <property type="project" value="UniProtKB"/>
</dbReference>
<dbReference type="GO" id="GO:0061459">
    <property type="term" value="F:L-arginine transmembrane transporter activity"/>
    <property type="evidence" value="ECO:0000314"/>
    <property type="project" value="UniProtKB"/>
</dbReference>
<dbReference type="GO" id="GO:0005290">
    <property type="term" value="F:L-histidine transmembrane transporter activity"/>
    <property type="evidence" value="ECO:0000314"/>
    <property type="project" value="FlyBase"/>
</dbReference>
<dbReference type="GO" id="GO:0015189">
    <property type="term" value="F:L-lysine transmembrane transporter activity"/>
    <property type="evidence" value="ECO:0000314"/>
    <property type="project" value="UniProtKB"/>
</dbReference>
<dbReference type="GO" id="GO:0080144">
    <property type="term" value="P:intracellular amino acid homeostasis"/>
    <property type="evidence" value="ECO:0000314"/>
    <property type="project" value="UniProtKB"/>
</dbReference>
<dbReference type="GO" id="GO:1903826">
    <property type="term" value="P:L-arginine transmembrane transport"/>
    <property type="evidence" value="ECO:0000314"/>
    <property type="project" value="UniProtKB"/>
</dbReference>
<dbReference type="GO" id="GO:0089709">
    <property type="term" value="P:L-histidine transmembrane transport"/>
    <property type="evidence" value="ECO:0000314"/>
    <property type="project" value="FlyBase"/>
</dbReference>
<dbReference type="GO" id="GO:1903401">
    <property type="term" value="P:L-lysine transmembrane transport"/>
    <property type="evidence" value="ECO:0000314"/>
    <property type="project" value="FlyBase"/>
</dbReference>
<dbReference type="GO" id="GO:0015819">
    <property type="term" value="P:lysine transport"/>
    <property type="evidence" value="ECO:0000314"/>
    <property type="project" value="UniProtKB"/>
</dbReference>
<dbReference type="GO" id="GO:0055085">
    <property type="term" value="P:transmembrane transport"/>
    <property type="evidence" value="ECO:0000304"/>
    <property type="project" value="Reactome"/>
</dbReference>
<dbReference type="FunFam" id="1.20.1280.290:FF:000013">
    <property type="entry name" value="lysosomal amino acid transporter 1 homolog"/>
    <property type="match status" value="1"/>
</dbReference>
<dbReference type="FunFam" id="1.20.1280.290:FF:000017">
    <property type="entry name" value="lysosomal amino acid transporter 1 homolog"/>
    <property type="match status" value="1"/>
</dbReference>
<dbReference type="Gene3D" id="1.20.1280.290">
    <property type="match status" value="2"/>
</dbReference>
<dbReference type="InterPro" id="IPR051415">
    <property type="entry name" value="LAAT-1"/>
</dbReference>
<dbReference type="InterPro" id="IPR006603">
    <property type="entry name" value="PQ-loop_rpt"/>
</dbReference>
<dbReference type="PANTHER" id="PTHR16201:SF36">
    <property type="entry name" value="LYSOSOMAL AMINO ACID TRANSPORTER 1 HOMOLOG"/>
    <property type="match status" value="1"/>
</dbReference>
<dbReference type="PANTHER" id="PTHR16201">
    <property type="entry name" value="SEVEN TRANSMEMBRANE PROTEIN 1-RELATED"/>
    <property type="match status" value="1"/>
</dbReference>
<dbReference type="Pfam" id="PF04193">
    <property type="entry name" value="PQ-loop"/>
    <property type="match status" value="2"/>
</dbReference>
<dbReference type="SMART" id="SM00679">
    <property type="entry name" value="CTNS"/>
    <property type="match status" value="2"/>
</dbReference>
<protein>
    <recommendedName>
        <fullName evidence="6">Lysosomal amino acid transporter 1 homolog</fullName>
    </recommendedName>
    <alternativeName>
        <fullName>PQ-loop repeat-containing protein 2</fullName>
    </alternativeName>
    <alternativeName>
        <fullName evidence="8">Solute carrier family 66 member 1</fullName>
    </alternativeName>
</protein>
<accession>Q6ZP29</accession>
<accession>B3KWQ5</accession>
<accession>Q6ZMJ3</accession>
<accession>Q6ZP27</accession>
<accession>Q9NXC7</accession>
<keyword id="KW-0025">Alternative splicing</keyword>
<keyword id="KW-0029">Amino-acid transport</keyword>
<keyword id="KW-0325">Glycoprotein</keyword>
<keyword id="KW-0458">Lysosome</keyword>
<keyword id="KW-0472">Membrane</keyword>
<keyword id="KW-1267">Proteomics identification</keyword>
<keyword id="KW-1185">Reference proteome</keyword>
<keyword id="KW-0677">Repeat</keyword>
<keyword id="KW-0812">Transmembrane</keyword>
<keyword id="KW-1133">Transmembrane helix</keyword>
<keyword id="KW-0813">Transport</keyword>
<evidence type="ECO:0000255" key="1"/>
<evidence type="ECO:0000269" key="2">
    <source>
    </source>
</evidence>
<evidence type="ECO:0000269" key="3">
    <source>
    </source>
</evidence>
<evidence type="ECO:0000303" key="4">
    <source>
    </source>
</evidence>
<evidence type="ECO:0000303" key="5">
    <source>
    </source>
</evidence>
<evidence type="ECO:0000305" key="6"/>
<evidence type="ECO:0000305" key="7">
    <source>
    </source>
</evidence>
<evidence type="ECO:0000312" key="8">
    <source>
        <dbReference type="HGNC" id="HGNC:26001"/>
    </source>
</evidence>
<organism>
    <name type="scientific">Homo sapiens</name>
    <name type="common">Human</name>
    <dbReference type="NCBI Taxonomy" id="9606"/>
    <lineage>
        <taxon>Eukaryota</taxon>
        <taxon>Metazoa</taxon>
        <taxon>Chordata</taxon>
        <taxon>Craniata</taxon>
        <taxon>Vertebrata</taxon>
        <taxon>Euteleostomi</taxon>
        <taxon>Mammalia</taxon>
        <taxon>Eutheria</taxon>
        <taxon>Euarchontoglires</taxon>
        <taxon>Primates</taxon>
        <taxon>Haplorrhini</taxon>
        <taxon>Catarrhini</taxon>
        <taxon>Hominidae</taxon>
        <taxon>Homo</taxon>
    </lineage>
</organism>